<protein>
    <recommendedName>
        <fullName evidence="1">Acetyl-coenzyme A carboxylase carboxyl transferase subunit alpha</fullName>
        <shortName evidence="1">ACCase subunit alpha</shortName>
        <shortName evidence="1">Acetyl-CoA carboxylase carboxyltransferase subunit alpha</shortName>
        <ecNumber evidence="1">2.1.3.15</ecNumber>
    </recommendedName>
</protein>
<feature type="chain" id="PRO_1000062597" description="Acetyl-coenzyme A carboxylase carboxyl transferase subunit alpha">
    <location>
        <begin position="1"/>
        <end position="311"/>
    </location>
</feature>
<feature type="domain" description="CoA carboxyltransferase C-terminal" evidence="2">
    <location>
        <begin position="36"/>
        <end position="286"/>
    </location>
</feature>
<evidence type="ECO:0000255" key="1">
    <source>
        <dbReference type="HAMAP-Rule" id="MF_00823"/>
    </source>
</evidence>
<evidence type="ECO:0000255" key="2">
    <source>
        <dbReference type="PROSITE-ProRule" id="PRU01137"/>
    </source>
</evidence>
<accession>A7GWR2</accession>
<organism>
    <name type="scientific">Campylobacter curvus (strain 525.92)</name>
    <dbReference type="NCBI Taxonomy" id="360105"/>
    <lineage>
        <taxon>Bacteria</taxon>
        <taxon>Pseudomonadati</taxon>
        <taxon>Campylobacterota</taxon>
        <taxon>Epsilonproteobacteria</taxon>
        <taxon>Campylobacterales</taxon>
        <taxon>Campylobacteraceae</taxon>
        <taxon>Campylobacter</taxon>
    </lineage>
</organism>
<reference key="1">
    <citation type="submission" date="2007-07" db="EMBL/GenBank/DDBJ databases">
        <title>Genome sequence of Campylobacter curvus 525.92 isolated from human feces.</title>
        <authorList>
            <person name="Fouts D.E."/>
            <person name="Mongodin E.F."/>
            <person name="Puiu D."/>
            <person name="Sebastian Y."/>
            <person name="Miller W.G."/>
            <person name="Mandrell R.E."/>
            <person name="Lastovica A.J."/>
            <person name="Nelson K.E."/>
        </authorList>
    </citation>
    <scope>NUCLEOTIDE SEQUENCE [LARGE SCALE GENOMIC DNA]</scope>
    <source>
        <strain>525.92</strain>
    </source>
</reference>
<keyword id="KW-0067">ATP-binding</keyword>
<keyword id="KW-0963">Cytoplasm</keyword>
<keyword id="KW-0275">Fatty acid biosynthesis</keyword>
<keyword id="KW-0276">Fatty acid metabolism</keyword>
<keyword id="KW-0444">Lipid biosynthesis</keyword>
<keyword id="KW-0443">Lipid metabolism</keyword>
<keyword id="KW-0547">Nucleotide-binding</keyword>
<keyword id="KW-1185">Reference proteome</keyword>
<keyword id="KW-0808">Transferase</keyword>
<name>ACCA_CAMC5</name>
<comment type="function">
    <text evidence="1">Component of the acetyl coenzyme A carboxylase (ACC) complex. First, biotin carboxylase catalyzes the carboxylation of biotin on its carrier protein (BCCP) and then the CO(2) group is transferred by the carboxyltransferase to acetyl-CoA to form malonyl-CoA.</text>
</comment>
<comment type="catalytic activity">
    <reaction evidence="1">
        <text>N(6)-carboxybiotinyl-L-lysyl-[protein] + acetyl-CoA = N(6)-biotinyl-L-lysyl-[protein] + malonyl-CoA</text>
        <dbReference type="Rhea" id="RHEA:54728"/>
        <dbReference type="Rhea" id="RHEA-COMP:10505"/>
        <dbReference type="Rhea" id="RHEA-COMP:10506"/>
        <dbReference type="ChEBI" id="CHEBI:57288"/>
        <dbReference type="ChEBI" id="CHEBI:57384"/>
        <dbReference type="ChEBI" id="CHEBI:83144"/>
        <dbReference type="ChEBI" id="CHEBI:83145"/>
        <dbReference type="EC" id="2.1.3.15"/>
    </reaction>
</comment>
<comment type="pathway">
    <text evidence="1">Lipid metabolism; malonyl-CoA biosynthesis; malonyl-CoA from acetyl-CoA: step 1/1.</text>
</comment>
<comment type="subunit">
    <text evidence="1">Acetyl-CoA carboxylase is a heterohexamer composed of biotin carboxyl carrier protein (AccB), biotin carboxylase (AccC) and two subunits each of ACCase subunit alpha (AccA) and ACCase subunit beta (AccD).</text>
</comment>
<comment type="subcellular location">
    <subcellularLocation>
        <location evidence="1">Cytoplasm</location>
    </subcellularLocation>
</comment>
<comment type="similarity">
    <text evidence="1">Belongs to the AccA family.</text>
</comment>
<proteinExistence type="inferred from homology"/>
<sequence>MSSYLDFEKSIKQIDDDIANARIKGDEHAVEILNKNLEKEVAKVYKNLNEYQRLQLARHPDRPYAIDYIRSFLMDAYEIHGDRAFRDDPAIVCYVGYIGGKKAMVIGEQKGRGTKNKLRRNFGMPHPEGYRKALRVAKLAEKFNLPILFLIDTPGAYPGVGAEERGQSEAIARNLFEFANLKVPTIAVVIGEGGSGGALAIGVADKLAMMKNSVFSVISPEGCAAILWNDPSKQEQATKAMKITADDLKNLKLIDDVIKEPINGAHRDKDGAAKELASYFVSKLEKLEKLSIDELVAKRIDKILSVGAYEE</sequence>
<gene>
    <name evidence="1" type="primary">accA</name>
    <name type="ordered locus">Ccur92_03500</name>
    <name type="ORF">CCV52592_1910</name>
</gene>
<dbReference type="EC" id="2.1.3.15" evidence="1"/>
<dbReference type="EMBL" id="CP000767">
    <property type="protein sequence ID" value="EAT99424.2"/>
    <property type="molecule type" value="Genomic_DNA"/>
</dbReference>
<dbReference type="RefSeq" id="WP_011991866.1">
    <property type="nucleotide sequence ID" value="NC_009715.2"/>
</dbReference>
<dbReference type="SMR" id="A7GWR2"/>
<dbReference type="STRING" id="360105.CCV52592_1910"/>
<dbReference type="KEGG" id="ccv:CCV52592_1910"/>
<dbReference type="HOGENOM" id="CLU_015486_0_2_7"/>
<dbReference type="OrthoDB" id="9808023at2"/>
<dbReference type="UniPathway" id="UPA00655">
    <property type="reaction ID" value="UER00711"/>
</dbReference>
<dbReference type="Proteomes" id="UP000006380">
    <property type="component" value="Chromosome"/>
</dbReference>
<dbReference type="GO" id="GO:0009317">
    <property type="term" value="C:acetyl-CoA carboxylase complex"/>
    <property type="evidence" value="ECO:0007669"/>
    <property type="project" value="InterPro"/>
</dbReference>
<dbReference type="GO" id="GO:0003989">
    <property type="term" value="F:acetyl-CoA carboxylase activity"/>
    <property type="evidence" value="ECO:0007669"/>
    <property type="project" value="InterPro"/>
</dbReference>
<dbReference type="GO" id="GO:0005524">
    <property type="term" value="F:ATP binding"/>
    <property type="evidence" value="ECO:0007669"/>
    <property type="project" value="UniProtKB-KW"/>
</dbReference>
<dbReference type="GO" id="GO:0016743">
    <property type="term" value="F:carboxyl- or carbamoyltransferase activity"/>
    <property type="evidence" value="ECO:0007669"/>
    <property type="project" value="UniProtKB-UniRule"/>
</dbReference>
<dbReference type="GO" id="GO:0006633">
    <property type="term" value="P:fatty acid biosynthetic process"/>
    <property type="evidence" value="ECO:0007669"/>
    <property type="project" value="UniProtKB-KW"/>
</dbReference>
<dbReference type="GO" id="GO:2001295">
    <property type="term" value="P:malonyl-CoA biosynthetic process"/>
    <property type="evidence" value="ECO:0007669"/>
    <property type="project" value="UniProtKB-UniRule"/>
</dbReference>
<dbReference type="Gene3D" id="3.90.226.10">
    <property type="entry name" value="2-enoyl-CoA Hydratase, Chain A, domain 1"/>
    <property type="match status" value="1"/>
</dbReference>
<dbReference type="HAMAP" id="MF_00823">
    <property type="entry name" value="AcetylCoA_CT_alpha"/>
    <property type="match status" value="1"/>
</dbReference>
<dbReference type="InterPro" id="IPR001095">
    <property type="entry name" value="Acetyl_CoA_COase_a_su"/>
</dbReference>
<dbReference type="InterPro" id="IPR029045">
    <property type="entry name" value="ClpP/crotonase-like_dom_sf"/>
</dbReference>
<dbReference type="InterPro" id="IPR011763">
    <property type="entry name" value="COA_CT_C"/>
</dbReference>
<dbReference type="NCBIfam" id="TIGR00513">
    <property type="entry name" value="accA"/>
    <property type="match status" value="1"/>
</dbReference>
<dbReference type="NCBIfam" id="NF041504">
    <property type="entry name" value="AccA_sub"/>
    <property type="match status" value="1"/>
</dbReference>
<dbReference type="NCBIfam" id="NF004344">
    <property type="entry name" value="PRK05724.1"/>
    <property type="match status" value="1"/>
</dbReference>
<dbReference type="PANTHER" id="PTHR42853">
    <property type="entry name" value="ACETYL-COENZYME A CARBOXYLASE CARBOXYL TRANSFERASE SUBUNIT ALPHA"/>
    <property type="match status" value="1"/>
</dbReference>
<dbReference type="PANTHER" id="PTHR42853:SF3">
    <property type="entry name" value="ACETYL-COENZYME A CARBOXYLASE CARBOXYL TRANSFERASE SUBUNIT ALPHA, CHLOROPLASTIC"/>
    <property type="match status" value="1"/>
</dbReference>
<dbReference type="Pfam" id="PF03255">
    <property type="entry name" value="ACCA"/>
    <property type="match status" value="1"/>
</dbReference>
<dbReference type="PRINTS" id="PR01069">
    <property type="entry name" value="ACCCTRFRASEA"/>
</dbReference>
<dbReference type="SUPFAM" id="SSF52096">
    <property type="entry name" value="ClpP/crotonase"/>
    <property type="match status" value="1"/>
</dbReference>
<dbReference type="PROSITE" id="PS50989">
    <property type="entry name" value="COA_CT_CTER"/>
    <property type="match status" value="1"/>
</dbReference>